<proteinExistence type="inferred from homology"/>
<evidence type="ECO:0000250" key="1"/>
<evidence type="ECO:0000255" key="2"/>
<evidence type="ECO:0000305" key="3"/>
<accession>P9WHI6</accession>
<accession>L0T7E7</accession>
<accession>O33197</accession>
<accession>P0A5U6</accession>
<protein>
    <recommendedName>
        <fullName>DNA repair protein RecN</fullName>
    </recommendedName>
    <alternativeName>
        <fullName>Recombination protein N</fullName>
    </alternativeName>
</protein>
<gene>
    <name type="primary">recN</name>
    <name type="ordered locus">MT1735</name>
</gene>
<organism>
    <name type="scientific">Mycobacterium tuberculosis (strain CDC 1551 / Oshkosh)</name>
    <dbReference type="NCBI Taxonomy" id="83331"/>
    <lineage>
        <taxon>Bacteria</taxon>
        <taxon>Bacillati</taxon>
        <taxon>Actinomycetota</taxon>
        <taxon>Actinomycetes</taxon>
        <taxon>Mycobacteriales</taxon>
        <taxon>Mycobacteriaceae</taxon>
        <taxon>Mycobacterium</taxon>
        <taxon>Mycobacterium tuberculosis complex</taxon>
    </lineage>
</organism>
<keyword id="KW-0067">ATP-binding</keyword>
<keyword id="KW-0227">DNA damage</keyword>
<keyword id="KW-0234">DNA repair</keyword>
<keyword id="KW-0547">Nucleotide-binding</keyword>
<keyword id="KW-1185">Reference proteome</keyword>
<name>RECN_MYCTO</name>
<comment type="function">
    <text evidence="1">May be involved in recombinational repair of damaged DNA.</text>
</comment>
<comment type="similarity">
    <text evidence="3">Belongs to the RecN family.</text>
</comment>
<sequence length="587" mass="62157">MLTELRIESLGAISVATAEFDRGFTVLTGETGTGKTMVVTGLHLLGGARADATRVRSGADRAVVEGRFTTTDLDDATVAGLQAVLDSSGAERDEDGSVIALRSISRDGPSRAYLGGRGVPAKSLSGFTNELLTLHGQNDQLRLMRPDEQRGALDRFAAAGEAVQRYRKLRDAWLTARRDLVDRRNRARELAQEADRLKFALNEIDTVDPQPGEDVALVADIARLSELDTLREAATTARATLCGTPDADAFDRGAVDSLGRARAALQSSDDAALRGLAEQVGEALTVVVDAVAELGAYLDELPADASALDAKLARQAQLRTLTRKYAADIDGVLRWADEARARLAQLDVSEEGLAALERRTGELAHELGQAAVDLSTIRRKAAKRLAKEVSAELSALAMADAEFTIGVTTGLADHGDPVALALASGELARAGADGVDAVEFGFVAHRGMTVLPLAKSASGGELSRVMLSLEVVLATSRKQAAGTTMVFDEIDAGVGGWAAVQIGRRLARLARTHQVIVVTHLPQVAAYADVHLMVQRTGRDGASGVRRLTSEDRVAELARMLAGLGDSDSGRAHARELLETAQNDELT</sequence>
<reference key="1">
    <citation type="journal article" date="2002" name="J. Bacteriol.">
        <title>Whole-genome comparison of Mycobacterium tuberculosis clinical and laboratory strains.</title>
        <authorList>
            <person name="Fleischmann R.D."/>
            <person name="Alland D."/>
            <person name="Eisen J.A."/>
            <person name="Carpenter L."/>
            <person name="White O."/>
            <person name="Peterson J.D."/>
            <person name="DeBoy R.T."/>
            <person name="Dodson R.J."/>
            <person name="Gwinn M.L."/>
            <person name="Haft D.H."/>
            <person name="Hickey E.K."/>
            <person name="Kolonay J.F."/>
            <person name="Nelson W.C."/>
            <person name="Umayam L.A."/>
            <person name="Ermolaeva M.D."/>
            <person name="Salzberg S.L."/>
            <person name="Delcher A."/>
            <person name="Utterback T.R."/>
            <person name="Weidman J.F."/>
            <person name="Khouri H.M."/>
            <person name="Gill J."/>
            <person name="Mikula A."/>
            <person name="Bishai W."/>
            <person name="Jacobs W.R. Jr."/>
            <person name="Venter J.C."/>
            <person name="Fraser C.M."/>
        </authorList>
    </citation>
    <scope>NUCLEOTIDE SEQUENCE [LARGE SCALE GENOMIC DNA]</scope>
    <source>
        <strain>CDC 1551 / Oshkosh</strain>
    </source>
</reference>
<feature type="chain" id="PRO_0000428180" description="DNA repair protein RecN">
    <location>
        <begin position="1"/>
        <end position="587"/>
    </location>
</feature>
<feature type="binding site" evidence="2">
    <location>
        <begin position="29"/>
        <end position="36"/>
    </location>
    <ligand>
        <name>ATP</name>
        <dbReference type="ChEBI" id="CHEBI:30616"/>
    </ligand>
</feature>
<dbReference type="EMBL" id="AE000516">
    <property type="protein sequence ID" value="AAK46004.1"/>
    <property type="molecule type" value="Genomic_DNA"/>
</dbReference>
<dbReference type="PIR" id="G70502">
    <property type="entry name" value="G70502"/>
</dbReference>
<dbReference type="RefSeq" id="WP_003917513.1">
    <property type="nucleotide sequence ID" value="NC_002755.2"/>
</dbReference>
<dbReference type="SMR" id="P9WHI6"/>
<dbReference type="KEGG" id="mtc:MT1735"/>
<dbReference type="PATRIC" id="fig|83331.31.peg.1863"/>
<dbReference type="HOGENOM" id="CLU_018297_3_0_11"/>
<dbReference type="Proteomes" id="UP000001020">
    <property type="component" value="Chromosome"/>
</dbReference>
<dbReference type="GO" id="GO:0043590">
    <property type="term" value="C:bacterial nucleoid"/>
    <property type="evidence" value="ECO:0007669"/>
    <property type="project" value="TreeGrafter"/>
</dbReference>
<dbReference type="GO" id="GO:0005524">
    <property type="term" value="F:ATP binding"/>
    <property type="evidence" value="ECO:0007669"/>
    <property type="project" value="UniProtKB-KW"/>
</dbReference>
<dbReference type="GO" id="GO:0006310">
    <property type="term" value="P:DNA recombination"/>
    <property type="evidence" value="ECO:0007669"/>
    <property type="project" value="InterPro"/>
</dbReference>
<dbReference type="GO" id="GO:0006281">
    <property type="term" value="P:DNA repair"/>
    <property type="evidence" value="ECO:0007669"/>
    <property type="project" value="UniProtKB-KW"/>
</dbReference>
<dbReference type="GO" id="GO:0009432">
    <property type="term" value="P:SOS response"/>
    <property type="evidence" value="ECO:0007669"/>
    <property type="project" value="TreeGrafter"/>
</dbReference>
<dbReference type="CDD" id="cd03241">
    <property type="entry name" value="ABC_RecN"/>
    <property type="match status" value="2"/>
</dbReference>
<dbReference type="FunFam" id="3.40.50.300:FF:000319">
    <property type="entry name" value="DNA repair protein RecN"/>
    <property type="match status" value="1"/>
</dbReference>
<dbReference type="FunFam" id="3.40.50.300:FF:000356">
    <property type="entry name" value="DNA repair protein RecN"/>
    <property type="match status" value="1"/>
</dbReference>
<dbReference type="Gene3D" id="3.40.50.300">
    <property type="entry name" value="P-loop containing nucleotide triphosphate hydrolases"/>
    <property type="match status" value="2"/>
</dbReference>
<dbReference type="InterPro" id="IPR004604">
    <property type="entry name" value="DNA_recomb/repair_RecN"/>
</dbReference>
<dbReference type="InterPro" id="IPR027417">
    <property type="entry name" value="P-loop_NTPase"/>
</dbReference>
<dbReference type="InterPro" id="IPR003395">
    <property type="entry name" value="RecF/RecN/SMC_N"/>
</dbReference>
<dbReference type="NCBIfam" id="TIGR00634">
    <property type="entry name" value="recN"/>
    <property type="match status" value="1"/>
</dbReference>
<dbReference type="PANTHER" id="PTHR11059">
    <property type="entry name" value="DNA REPAIR PROTEIN RECN"/>
    <property type="match status" value="1"/>
</dbReference>
<dbReference type="PANTHER" id="PTHR11059:SF0">
    <property type="entry name" value="DNA REPAIR PROTEIN RECN"/>
    <property type="match status" value="1"/>
</dbReference>
<dbReference type="Pfam" id="PF02463">
    <property type="entry name" value="SMC_N"/>
    <property type="match status" value="1"/>
</dbReference>
<dbReference type="PIRSF" id="PIRSF003128">
    <property type="entry name" value="RecN"/>
    <property type="match status" value="1"/>
</dbReference>
<dbReference type="SUPFAM" id="SSF52540">
    <property type="entry name" value="P-loop containing nucleoside triphosphate hydrolases"/>
    <property type="match status" value="2"/>
</dbReference>